<dbReference type="EC" id="3.1.-.-" evidence="3"/>
<dbReference type="EMBL" id="DAAA02056622">
    <property type="status" value="NOT_ANNOTATED_CDS"/>
    <property type="molecule type" value="Genomic_DNA"/>
</dbReference>
<dbReference type="EMBL" id="DAAA02056623">
    <property type="status" value="NOT_ANNOTATED_CDS"/>
    <property type="molecule type" value="Genomic_DNA"/>
</dbReference>
<dbReference type="EMBL" id="BC148953">
    <property type="protein sequence ID" value="AAI48954.1"/>
    <property type="molecule type" value="mRNA"/>
</dbReference>
<dbReference type="RefSeq" id="NP_001095436.1">
    <property type="nucleotide sequence ID" value="NM_001101966.1"/>
</dbReference>
<dbReference type="SMR" id="A6QNQ6"/>
<dbReference type="FunCoup" id="A6QNQ6">
    <property type="interactions" value="1646"/>
</dbReference>
<dbReference type="STRING" id="9913.ENSBTAP00000073495"/>
<dbReference type="PaxDb" id="9913-ENSBTAP00000008875"/>
<dbReference type="KEGG" id="bta:512977"/>
<dbReference type="CTD" id="5932"/>
<dbReference type="eggNOG" id="ENOG502QTV5">
    <property type="taxonomic scope" value="Eukaryota"/>
</dbReference>
<dbReference type="HOGENOM" id="CLU_019262_0_0_1"/>
<dbReference type="InParanoid" id="A6QNQ6"/>
<dbReference type="OrthoDB" id="5801062at2759"/>
<dbReference type="TreeFam" id="TF106469"/>
<dbReference type="Proteomes" id="UP000009136">
    <property type="component" value="Unplaced"/>
</dbReference>
<dbReference type="GO" id="GO:0005694">
    <property type="term" value="C:chromosome"/>
    <property type="evidence" value="ECO:0007669"/>
    <property type="project" value="UniProtKB-SubCell"/>
</dbReference>
<dbReference type="GO" id="GO:0005634">
    <property type="term" value="C:nucleus"/>
    <property type="evidence" value="ECO:0007669"/>
    <property type="project" value="UniProtKB-SubCell"/>
</dbReference>
<dbReference type="GO" id="GO:0003684">
    <property type="term" value="F:damaged DNA binding"/>
    <property type="evidence" value="ECO:0000318"/>
    <property type="project" value="GO_Central"/>
</dbReference>
<dbReference type="GO" id="GO:0004519">
    <property type="term" value="F:endonuclease activity"/>
    <property type="evidence" value="ECO:0007669"/>
    <property type="project" value="UniProtKB-KW"/>
</dbReference>
<dbReference type="GO" id="GO:0051301">
    <property type="term" value="P:cell division"/>
    <property type="evidence" value="ECO:0007669"/>
    <property type="project" value="UniProtKB-KW"/>
</dbReference>
<dbReference type="GO" id="GO:0010792">
    <property type="term" value="P:DNA double-strand break processing involved in repair via single-strand annealing"/>
    <property type="evidence" value="ECO:0000318"/>
    <property type="project" value="GO_Central"/>
</dbReference>
<dbReference type="GO" id="GO:0000724">
    <property type="term" value="P:double-strand break repair via homologous recombination"/>
    <property type="evidence" value="ECO:0000250"/>
    <property type="project" value="UniProtKB"/>
</dbReference>
<dbReference type="GO" id="GO:0051321">
    <property type="term" value="P:meiotic cell cycle"/>
    <property type="evidence" value="ECO:0007669"/>
    <property type="project" value="UniProtKB-KW"/>
</dbReference>
<dbReference type="InterPro" id="IPR019518">
    <property type="entry name" value="CtIP_N"/>
</dbReference>
<dbReference type="InterPro" id="IPR033316">
    <property type="entry name" value="RBBP8-like"/>
</dbReference>
<dbReference type="PANTHER" id="PTHR15107:SF4">
    <property type="entry name" value="DNA ENDONUCLEASE RBBP8"/>
    <property type="match status" value="1"/>
</dbReference>
<dbReference type="PANTHER" id="PTHR15107">
    <property type="entry name" value="RETINOBLASTOMA BINDING PROTEIN 8"/>
    <property type="match status" value="1"/>
</dbReference>
<dbReference type="Pfam" id="PF10482">
    <property type="entry name" value="CtIP_N"/>
    <property type="match status" value="1"/>
</dbReference>
<accession>A6QNQ6</accession>
<accession>E1BLK8</accession>
<keyword id="KW-0131">Cell cycle</keyword>
<keyword id="KW-0132">Cell division</keyword>
<keyword id="KW-0158">Chromosome</keyword>
<keyword id="KW-0175">Coiled coil</keyword>
<keyword id="KW-0227">DNA damage</keyword>
<keyword id="KW-0234">DNA repair</keyword>
<keyword id="KW-0238">DNA-binding</keyword>
<keyword id="KW-0255">Endonuclease</keyword>
<keyword id="KW-0378">Hydrolase</keyword>
<keyword id="KW-1017">Isopeptide bond</keyword>
<keyword id="KW-0469">Meiosis</keyword>
<keyword id="KW-0498">Mitosis</keyword>
<keyword id="KW-0540">Nuclease</keyword>
<keyword id="KW-0539">Nucleus</keyword>
<keyword id="KW-0597">Phosphoprotein</keyword>
<keyword id="KW-1185">Reference proteome</keyword>
<keyword id="KW-0832">Ubl conjugation</keyword>
<keyword id="KW-0862">Zinc</keyword>
<organism>
    <name type="scientific">Bos taurus</name>
    <name type="common">Bovine</name>
    <dbReference type="NCBI Taxonomy" id="9913"/>
    <lineage>
        <taxon>Eukaryota</taxon>
        <taxon>Metazoa</taxon>
        <taxon>Chordata</taxon>
        <taxon>Craniata</taxon>
        <taxon>Vertebrata</taxon>
        <taxon>Euteleostomi</taxon>
        <taxon>Mammalia</taxon>
        <taxon>Eutheria</taxon>
        <taxon>Laurasiatheria</taxon>
        <taxon>Artiodactyla</taxon>
        <taxon>Ruminantia</taxon>
        <taxon>Pecora</taxon>
        <taxon>Bovidae</taxon>
        <taxon>Bovinae</taxon>
        <taxon>Bos</taxon>
    </lineage>
</organism>
<evidence type="ECO:0000250" key="1"/>
<evidence type="ECO:0000250" key="2">
    <source>
        <dbReference type="UniProtKB" id="Q80YR6"/>
    </source>
</evidence>
<evidence type="ECO:0000250" key="3">
    <source>
        <dbReference type="UniProtKB" id="Q99708"/>
    </source>
</evidence>
<evidence type="ECO:0000256" key="4">
    <source>
        <dbReference type="SAM" id="MobiDB-lite"/>
    </source>
</evidence>
<evidence type="ECO:0000305" key="5"/>
<sequence>MNLSGSSCGSPSSADVSNDFKDLWTKLKEYHDKETQGLQVKVTKLKKERILDAQRLEEFFTKNQQLREQQKVLHETIKVLEDRLRAGLCDRCAVTEEHMRKKQQEFENIRQQNLKLITELMNEKNTLQEENKKLSEQLQQKIENDQPHKATDLESEEDVIPDSPITTFSFSGTNRLRRKENLRVRYIEQTHAKLEHSGCAHELRTVPKSSAHPQHKPKESEILVADTCDQSQAPVAKPHGKSSYTPDNLATVVAETLGLCVQEESESRGPQSPLGDELYHCLEGDHKKQAFEECRRNSEDNLRFSDSKTPFQEELTTRVSSPVFGAPSNVKSSLGLNTSLSPSLLETGKKTHLKTVPLSNTSAPGPEKPRSKSEDGTLITHHHLGTEVNKIPSQSSSNKQMLINKNTSEPISEQGNIGHSKDTDRDKHVVPLKSLGGRTKRKKIEEESEDEVICPQASFDKENAFPFPLDSHSSMNGDYVMDKPLDLSDRFSAIQRQEKSQGCENSKIRFRQVTLYEALKPIPRDSSSSRKALSGSCGLTKDSPEEPCLQESLFQSLSKSPDNKTLLQIKEENPVFKIPLRPRESFETENLFDDTKGAGSHEPIKIKTRSVRGACEVASVLQLNPCRIAKTKSLQNNQDVSFENIQWSIDPGADLSQYKMGVTVDDTKDGSQSRLAGETVDMDCTLVSETMLLKLKKQEQKGEESPNGERKMNDSLEDMFDRTTHEEYESCLAESFPQVADEEKELSTTTKKPNISW</sequence>
<gene>
    <name type="primary">RBBP8</name>
    <name type="synonym">CTIP</name>
</gene>
<comment type="function">
    <text evidence="2 3">Endonuclease that cooperates with the MRE11-RAD50-NBN (MRN) complex in DNA-end resection, the first step of double-strand break (DSB) repair through the homologous recombination (HR) pathway. HR is restricted to S and G2 phases of the cell cycle and preferentially repairs DSBs resulting from replication fork collapse. Key determinant of DSB repair pathway choice, as it commits cells to HR by preventing classical non-homologous end-joining (NHEJ). Specifically promotes the endonuclease activity of the MRN complex to clear DNA ends containing protein adducts: recruited to DSBs by NBN following phosphorylation by CDK1, and promotes the endonuclease activity of MRE11 to clear protein-DNA adducts and generate clean double-strand break ends. Functions downstream of the MRN complex and ATM, promotes ATR activation and its recruitment to DSBs in the S/G2 phase facilitating the generation of ssDNA. Component of the BRCA1-RBBP8 complex that regulates CHEK1 activation and controls cell cycle G2/M checkpoints on DNA damage (By similarity). During immunoglobulin heavy chain class-switch recombination, promotes microhomology-mediated alternative end joining (A-NHEJ) and plays an essential role in chromosomal translocations (By similarity). Binds preferentially to DNA Y-junctions and to DNA substrates with blocked ends and promotes intermolecular DNA bridging (By similarity).</text>
</comment>
<comment type="subunit">
    <text evidence="3">Homotetramer; formed by antiparallel association of helical extensions protruding from the N-termini of two parallel coiled-coil dimers (By similarity). Forms a dumbbell-shaped particle in which polar globular domains are held about 30 nm apart by a central rod (By similarity). Homotetramerization is required for DNA-end resection and repair (By similarity). Interacts (via the PXDLS motif) with CTBP1; the interaction is disrupted via binding of the adenovirus E1A to CTBP1. Component of the BRCA1-RBBP8 complex. Interacts (the Ser-321 phosphorylated form) with BRCA1 (via the C-terminal BRCT domains): the interaction occurs in the G2 phase, ubiquitinates RBBP8 and involves RBBP8 in BRCA1-dependent G2/M checkpoint control on DNA damage. Interacts with RB1. Interacts with the MRN complex. Interacts directly with MRE11; the interaction is required for efficient homologous recombination (HR) and regulation of the MRN complex. Interacts directly with RAD50. Interacts (when phosphorylated by CDK1) with NBN; promoting association with the MRN complex. Interacts with LMO4 (via the LIM zinc-binding 1 domain). Interacts with SIAH1. Interacts with RNF138. Interacts with EXD2. Interacts with CUL3 and KLHL15; this interaction leads to RBBP8 proteasomal degradation. Directly interacts with PIN1; this interaction depends upon RBBP8 phosphorylation, predominantly at Thr-309. Interacts with FZR1; this interaction leads to APC/C-mediated RBBP8 proteasomal degradation. Interacts with AUNIP; leading to recruit RBBP8 to sites of DNA damage. Interacts with SAMHD1 (By similarity). Interacts with HDGFL2 (By similarity).</text>
</comment>
<comment type="subcellular location">
    <subcellularLocation>
        <location evidence="3">Nucleus</location>
    </subcellularLocation>
    <subcellularLocation>
        <location evidence="3">Chromosome</location>
    </subcellularLocation>
    <text evidence="3">Associates with sites of DNA damage in S/G2 phase. Recruited to DSBs by the MRE11-RAD50-NBN (MRN) complex following phosphorylation by CDK1, which promotes interaction with NBN. Ubiquitinated RBBP8 binds to chromatin following DNA damage.</text>
</comment>
<comment type="domain">
    <text evidence="3">The PXDLS motif binds to a cleft in CtBP proteins.</text>
</comment>
<comment type="domain">
    <text evidence="3">The damage-recruitment motif is required for DNA binding and translocation to sites of DNA damage.</text>
</comment>
<comment type="PTM">
    <text evidence="3">Hyperphosphorylation upon ionizing radiation results in dissociation from BRCA1. Phosphorylation by CDK1 is essential for the recruitment to DNA and the DNA repair function. Phosphorylated on Ser-321 as cells enter G2 phase. This phosphorylation is required for binding BRCA1 and for the G2/M DNA damage transition checkpoint control (By similarity). Phosphorylation at Thr-309, probably catalyzed by CDK2, is required for PIN1-binding, while phosphorylation at Ser-272 serves as a PIN1 isomerization site. Phosphorylation at Thr-309 is cell-cycle dependent. It steadily increases during S phase, peaks at late S/G2 phase, and drops at G1 (By similarity). Phosphorylation is not required for tetramerization (By similarity). Binds to DNA more strongly when dephosphorylated (By similarity).</text>
</comment>
<comment type="PTM">
    <text evidence="3">Ubiquitinated. Ubiquitination at multiple sites by BRCA1 (via its N-terminal RING domain) does not lead to its proteasomal degradation but instead the ubiquitinated RBBP8 binds to chromatin following DNA damage and may play a role in G2/M checkpoint control. Ubiquitinated by RNF138 at its N-terminus. Ubiquitinated through 'Lys-48' by the E3 CUL3-KLHL15 complex; this modification leads to proteasomal degradation (By similarity). Ubiquitinated by the E3 FZR1/APC/C complex; this modification leads to proteasomal degradation (By similarity).</text>
</comment>
<comment type="miscellaneous">
    <text evidence="3">Binds one Zn(2+) atom per dimer. Zn(2+)-binding is not required for homotetramerization.</text>
</comment>
<comment type="similarity">
    <text evidence="5">Belongs to the COM1/SAE2/CtIP family.</text>
</comment>
<feature type="chain" id="PRO_0000417035" description="DNA endonuclease RBBP8">
    <location>
        <begin position="1"/>
        <end position="757"/>
    </location>
</feature>
<feature type="region of interest" description="Essential for binding to the MRN complex and for RPA focus formation on DNA damage" evidence="1">
    <location>
        <begin position="22"/>
        <end position="45"/>
    </location>
</feature>
<feature type="region of interest" description="Required for interaction with LMO4, probably by stabilizing the interaction through RPPB8 dimerization" evidence="3">
    <location>
        <begin position="45"/>
        <end position="160"/>
    </location>
</feature>
<feature type="region of interest" description="Disordered" evidence="4">
    <location>
        <begin position="348"/>
        <end position="375"/>
    </location>
</feature>
<feature type="region of interest" description="Disordered" evidence="4">
    <location>
        <begin position="407"/>
        <end position="430"/>
    </location>
</feature>
<feature type="region of interest" description="PXDLS motif">
    <location>
        <begin position="484"/>
        <end position="488"/>
    </location>
</feature>
<feature type="region of interest" description="Damage-recruitment motif" evidence="3">
    <location>
        <begin position="503"/>
        <end position="551"/>
    </location>
</feature>
<feature type="region of interest" description="Disordered" evidence="4">
    <location>
        <begin position="524"/>
        <end position="544"/>
    </location>
</feature>
<feature type="region of interest" description="Required for interaction with LMO4, probably by making physical contact with LMO4" evidence="3">
    <location>
        <begin position="633"/>
        <end position="677"/>
    </location>
</feature>
<feature type="region of interest" description="Disordered" evidence="4">
    <location>
        <begin position="696"/>
        <end position="757"/>
    </location>
</feature>
<feature type="coiled-coil region" evidence="3">
    <location>
        <begin position="35"/>
        <end position="84"/>
    </location>
</feature>
<feature type="coiled-coil region" evidence="3">
    <location>
        <begin position="117"/>
        <end position="138"/>
    </location>
</feature>
<feature type="short sequence motif" description="PXDLS motif" evidence="3">
    <location>
        <begin position="484"/>
        <end position="488"/>
    </location>
</feature>
<feature type="compositionally biased region" description="Polar residues" evidence="4">
    <location>
        <begin position="407"/>
        <end position="417"/>
    </location>
</feature>
<feature type="compositionally biased region" description="Basic and acidic residues" evidence="4">
    <location>
        <begin position="419"/>
        <end position="429"/>
    </location>
</feature>
<feature type="compositionally biased region" description="Basic and acidic residues" evidence="4">
    <location>
        <begin position="696"/>
        <end position="728"/>
    </location>
</feature>
<feature type="compositionally biased region" description="Polar residues" evidence="4">
    <location>
        <begin position="747"/>
        <end position="757"/>
    </location>
</feature>
<feature type="modified residue" description="Phosphoserine" evidence="3">
    <location>
        <position position="272"/>
    </location>
</feature>
<feature type="modified residue" description="Phosphothreonine" evidence="3">
    <location>
        <position position="309"/>
    </location>
</feature>
<feature type="modified residue" description="Phosphoserine" evidence="3">
    <location>
        <position position="320"/>
    </location>
</feature>
<feature type="modified residue" description="Phosphoserine" evidence="3">
    <location>
        <position position="321"/>
    </location>
</feature>
<feature type="modified residue" description="Phosphoserine" evidence="3">
    <location>
        <position position="343"/>
    </location>
</feature>
<feature type="modified residue" description="Phosphoserine" evidence="3">
    <location>
        <position position="373"/>
    </location>
</feature>
<feature type="modified residue" description="Phosphoserine; by ATM" evidence="3">
    <location>
        <position position="656"/>
    </location>
</feature>
<feature type="modified residue" description="Phosphoserine" evidence="3">
    <location>
        <position position="671"/>
    </location>
</feature>
<feature type="modified residue" description="Phosphoserine" evidence="3">
    <location>
        <position position="715"/>
    </location>
</feature>
<feature type="cross-link" description="Glycyl lysine isopeptide (Lys-Gly) (interchain with G-Cter in SUMO2)" evidence="3">
    <location>
        <position position="62"/>
    </location>
</feature>
<feature type="cross-link" description="Glycyl lysine isopeptide (Lys-Gly) (interchain with G-Cter in SUMO2)" evidence="3">
    <location>
        <position position="115"/>
    </location>
</feature>
<feature type="cross-link" description="Glycyl lysine isopeptide (Lys-Gly) (interchain with G-Cter in SUMO2)" evidence="3">
    <location>
        <position position="193"/>
    </location>
</feature>
<feature type="cross-link" description="Glycyl lysine isopeptide (Lys-Gly) (interchain with G-Cter in SUMO2)" evidence="3">
    <location>
        <position position="354"/>
    </location>
</feature>
<feature type="cross-link" description="Glycyl lysine isopeptide (Lys-Gly) (interchain with G-Cter in SUMO2)" evidence="3">
    <location>
        <position position="372"/>
    </location>
</feature>
<feature type="cross-link" description="Glycyl lysine isopeptide (Lys-Gly) (interchain with G-Cter in SUMO2)" evidence="3">
    <location>
        <position position="390"/>
    </location>
</feature>
<feature type="cross-link" description="Glycyl lysine isopeptide (Lys-Gly) (interchain with G-Cter in SUMO2)" evidence="3">
    <location>
        <position position="399"/>
    </location>
</feature>
<feature type="cross-link" description="Glycyl lysine isopeptide (Lys-Gly) (interchain with G-Cter in SUMO2)" evidence="3">
    <location>
        <position position="405"/>
    </location>
</feature>
<feature type="cross-link" description="Glycyl lysine isopeptide (Lys-Gly) (interchain with G-Cter in SUMO2)" evidence="3">
    <location>
        <position position="433"/>
    </location>
</feature>
<feature type="cross-link" description="Glycyl lysine isopeptide (Lys-Gly) (interchain with G-Cter in SUMO2)" evidence="3">
    <location>
        <position position="443"/>
    </location>
</feature>
<feature type="cross-link" description="Glycyl lysine isopeptide (Lys-Gly) (interchain with G-Cter in SUMO2); alternate" evidence="3">
    <location>
        <position position="520"/>
    </location>
</feature>
<feature type="cross-link" description="Glycyl lysine isopeptide (Lys-Gly) (interchain with G-Cter in SUMO2)" evidence="3">
    <location>
        <position position="564"/>
    </location>
</feature>
<feature type="cross-link" description="Glycyl lysine isopeptide (Lys-Gly) (interchain with G-Cter in SUMO2)" evidence="3">
    <location>
        <position position="570"/>
    </location>
</feature>
<feature type="cross-link" description="Glycyl lysine isopeptide (Lys-Gly) (interchain with G-Cter in SUMO2); alternate" evidence="3">
    <location>
        <position position="596"/>
    </location>
</feature>
<feature type="cross-link" description="Glycyl lysine isopeptide (Lys-Gly) (interchain with G-Cter in SUMO2)" evidence="3">
    <location>
        <position position="605"/>
    </location>
</feature>
<feature type="cross-link" description="Glycyl lysine isopeptide (Lys-Gly) (interchain with G-Cter in SUMO2)" evidence="3">
    <location>
        <position position="630"/>
    </location>
</feature>
<feature type="cross-link" description="Glycyl lysine isopeptide (Lys-Gly) (interchain with G-Cter in SUMO2)" evidence="3">
    <location>
        <position position="632"/>
    </location>
</feature>
<feature type="cross-link" description="Glycyl lysine isopeptide (Lys-Gly) (interchain with G-Cter in SUMO2)" evidence="3">
    <location>
        <position position="668"/>
    </location>
</feature>
<feature type="cross-link" description="Glycyl lysine isopeptide (Lys-Gly) (interchain with G-Cter in SUMO2)" evidence="3">
    <location>
        <position position="711"/>
    </location>
</feature>
<feature type="sequence conflict" description="In Ref. 2; AAI48954." evidence="5" ref="2">
    <original>T</original>
    <variation>V</variation>
    <location>
        <position position="35"/>
    </location>
</feature>
<feature type="sequence conflict" description="In Ref. 2; AAI48954." evidence="5" ref="2">
    <original>PNI</original>
    <variation>TKH</variation>
    <location>
        <begin position="753"/>
        <end position="755"/>
    </location>
</feature>
<reference key="1">
    <citation type="journal article" date="2009" name="Genome Biol.">
        <title>A whole-genome assembly of the domestic cow, Bos taurus.</title>
        <authorList>
            <person name="Zimin A.V."/>
            <person name="Delcher A.L."/>
            <person name="Florea L."/>
            <person name="Kelley D.R."/>
            <person name="Schatz M.C."/>
            <person name="Puiu D."/>
            <person name="Hanrahan F."/>
            <person name="Pertea G."/>
            <person name="Van Tassell C.P."/>
            <person name="Sonstegard T.S."/>
            <person name="Marcais G."/>
            <person name="Roberts M."/>
            <person name="Subramanian P."/>
            <person name="Yorke J.A."/>
            <person name="Salzberg S.L."/>
        </authorList>
    </citation>
    <scope>NUCLEOTIDE SEQUENCE [LARGE SCALE GENOMIC DNA]</scope>
    <source>
        <strain>Hereford</strain>
    </source>
</reference>
<reference key="2">
    <citation type="submission" date="2007-07" db="EMBL/GenBank/DDBJ databases">
        <authorList>
            <consortium name="NIH - Mammalian Gene Collection (MGC) project"/>
        </authorList>
    </citation>
    <scope>NUCLEOTIDE SEQUENCE [LARGE SCALE MRNA]</scope>
    <source>
        <strain>Hereford</strain>
        <tissue>Ascending colon</tissue>
    </source>
</reference>
<proteinExistence type="evidence at transcript level"/>
<protein>
    <recommendedName>
        <fullName>DNA endonuclease RBBP8</fullName>
        <ecNumber evidence="3">3.1.-.-</ecNumber>
    </recommendedName>
    <alternativeName>
        <fullName>CtBP-interacting protein</fullName>
        <shortName>CtIP</shortName>
    </alternativeName>
    <alternativeName>
        <fullName>Retinoblastoma-binding protein 8</fullName>
        <shortName>RBBP-8</shortName>
    </alternativeName>
    <alternativeName>
        <fullName>Retinoblastoma-interacting protein and myosin-like</fullName>
        <shortName>RIM</shortName>
    </alternativeName>
    <alternativeName>
        <fullName>Sporulation in the absence of SPO11 protein 2 homolog</fullName>
        <shortName>SAE2</shortName>
    </alternativeName>
</protein>
<name>CTIP_BOVIN</name>